<proteinExistence type="inferred from homology"/>
<reference key="1">
    <citation type="journal article" date="2005" name="Nature">
        <title>The genome of the social amoeba Dictyostelium discoideum.</title>
        <authorList>
            <person name="Eichinger L."/>
            <person name="Pachebat J.A."/>
            <person name="Gloeckner G."/>
            <person name="Rajandream M.A."/>
            <person name="Sucgang R."/>
            <person name="Berriman M."/>
            <person name="Song J."/>
            <person name="Olsen R."/>
            <person name="Szafranski K."/>
            <person name="Xu Q."/>
            <person name="Tunggal B."/>
            <person name="Kummerfeld S."/>
            <person name="Madera M."/>
            <person name="Konfortov B.A."/>
            <person name="Rivero F."/>
            <person name="Bankier A.T."/>
            <person name="Lehmann R."/>
            <person name="Hamlin N."/>
            <person name="Davies R."/>
            <person name="Gaudet P."/>
            <person name="Fey P."/>
            <person name="Pilcher K."/>
            <person name="Chen G."/>
            <person name="Saunders D."/>
            <person name="Sodergren E.J."/>
            <person name="Davis P."/>
            <person name="Kerhornou A."/>
            <person name="Nie X."/>
            <person name="Hall N."/>
            <person name="Anjard C."/>
            <person name="Hemphill L."/>
            <person name="Bason N."/>
            <person name="Farbrother P."/>
            <person name="Desany B."/>
            <person name="Just E."/>
            <person name="Morio T."/>
            <person name="Rost R."/>
            <person name="Churcher C.M."/>
            <person name="Cooper J."/>
            <person name="Haydock S."/>
            <person name="van Driessche N."/>
            <person name="Cronin A."/>
            <person name="Goodhead I."/>
            <person name="Muzny D.M."/>
            <person name="Mourier T."/>
            <person name="Pain A."/>
            <person name="Lu M."/>
            <person name="Harper D."/>
            <person name="Lindsay R."/>
            <person name="Hauser H."/>
            <person name="James K.D."/>
            <person name="Quiles M."/>
            <person name="Madan Babu M."/>
            <person name="Saito T."/>
            <person name="Buchrieser C."/>
            <person name="Wardroper A."/>
            <person name="Felder M."/>
            <person name="Thangavelu M."/>
            <person name="Johnson D."/>
            <person name="Knights A."/>
            <person name="Loulseged H."/>
            <person name="Mungall K.L."/>
            <person name="Oliver K."/>
            <person name="Price C."/>
            <person name="Quail M.A."/>
            <person name="Urushihara H."/>
            <person name="Hernandez J."/>
            <person name="Rabbinowitsch E."/>
            <person name="Steffen D."/>
            <person name="Sanders M."/>
            <person name="Ma J."/>
            <person name="Kohara Y."/>
            <person name="Sharp S."/>
            <person name="Simmonds M.N."/>
            <person name="Spiegler S."/>
            <person name="Tivey A."/>
            <person name="Sugano S."/>
            <person name="White B."/>
            <person name="Walker D."/>
            <person name="Woodward J.R."/>
            <person name="Winckler T."/>
            <person name="Tanaka Y."/>
            <person name="Shaulsky G."/>
            <person name="Schleicher M."/>
            <person name="Weinstock G.M."/>
            <person name="Rosenthal A."/>
            <person name="Cox E.C."/>
            <person name="Chisholm R.L."/>
            <person name="Gibbs R.A."/>
            <person name="Loomis W.F."/>
            <person name="Platzer M."/>
            <person name="Kay R.R."/>
            <person name="Williams J.G."/>
            <person name="Dear P.H."/>
            <person name="Noegel A.A."/>
            <person name="Barrell B.G."/>
            <person name="Kuspa A."/>
        </authorList>
    </citation>
    <scope>NUCLEOTIDE SEQUENCE [LARGE SCALE GENOMIC DNA]</scope>
    <source>
        <strain>AX4</strain>
    </source>
</reference>
<keyword id="KW-0010">Activator</keyword>
<keyword id="KW-0175">Coiled coil</keyword>
<keyword id="KW-0539">Nucleus</keyword>
<keyword id="KW-1185">Reference proteome</keyword>
<keyword id="KW-0804">Transcription</keyword>
<keyword id="KW-0805">Transcription regulation</keyword>
<gene>
    <name type="primary">leo1</name>
    <name type="ORF">DDB_G0286051</name>
</gene>
<evidence type="ECO:0000250" key="1"/>
<evidence type="ECO:0000255" key="2"/>
<evidence type="ECO:0000256" key="3">
    <source>
        <dbReference type="SAM" id="MobiDB-lite"/>
    </source>
</evidence>
<evidence type="ECO:0000305" key="4"/>
<protein>
    <recommendedName>
        <fullName>RNA polymerase-associated protein LEO1</fullName>
    </recommendedName>
</protein>
<accession>Q54MB8</accession>
<name>LEO1_DICDI</name>
<organism>
    <name type="scientific">Dictyostelium discoideum</name>
    <name type="common">Social amoeba</name>
    <dbReference type="NCBI Taxonomy" id="44689"/>
    <lineage>
        <taxon>Eukaryota</taxon>
        <taxon>Amoebozoa</taxon>
        <taxon>Evosea</taxon>
        <taxon>Eumycetozoa</taxon>
        <taxon>Dictyostelia</taxon>
        <taxon>Dictyosteliales</taxon>
        <taxon>Dictyosteliaceae</taxon>
        <taxon>Dictyostelium</taxon>
    </lineage>
</organism>
<comment type="function">
    <text>The PAF1 complex is a multifunctional complex. May be involved in both initiation and elongation, histone methylation and RNA processing.</text>
</comment>
<comment type="subunit">
    <text evidence="1">Component of the PAF1 complex.</text>
</comment>
<comment type="subcellular location">
    <subcellularLocation>
        <location evidence="1">Nucleus</location>
    </subcellularLocation>
</comment>
<comment type="similarity">
    <text evidence="4">Belongs to the LEO1 family.</text>
</comment>
<dbReference type="EMBL" id="AAFI02000085">
    <property type="protein sequence ID" value="EAL64404.1"/>
    <property type="molecule type" value="Genomic_DNA"/>
</dbReference>
<dbReference type="RefSeq" id="XP_637916.1">
    <property type="nucleotide sequence ID" value="XM_632824.1"/>
</dbReference>
<dbReference type="SMR" id="Q54MB8"/>
<dbReference type="FunCoup" id="Q54MB8">
    <property type="interactions" value="385"/>
</dbReference>
<dbReference type="STRING" id="44689.Q54MB8"/>
<dbReference type="PaxDb" id="44689-DDB0267056"/>
<dbReference type="EnsemblProtists" id="EAL64404">
    <property type="protein sequence ID" value="EAL64404"/>
    <property type="gene ID" value="DDB_G0286051"/>
</dbReference>
<dbReference type="GeneID" id="8625427"/>
<dbReference type="KEGG" id="ddi:DDB_G0286051"/>
<dbReference type="dictyBase" id="DDB_G0286051">
    <property type="gene designation" value="leo1"/>
</dbReference>
<dbReference type="VEuPathDB" id="AmoebaDB:DDB_G0286051"/>
<dbReference type="eggNOG" id="KOG2428">
    <property type="taxonomic scope" value="Eukaryota"/>
</dbReference>
<dbReference type="HOGENOM" id="CLU_560727_0_0_1"/>
<dbReference type="InParanoid" id="Q54MB8"/>
<dbReference type="OMA" id="TNIYRWS"/>
<dbReference type="PRO" id="PR:Q54MB8"/>
<dbReference type="Proteomes" id="UP000002195">
    <property type="component" value="Chromosome 4"/>
</dbReference>
<dbReference type="GO" id="GO:0016593">
    <property type="term" value="C:Cdc73/Paf1 complex"/>
    <property type="evidence" value="ECO:0007669"/>
    <property type="project" value="InterPro"/>
</dbReference>
<dbReference type="GO" id="GO:0005634">
    <property type="term" value="C:nucleus"/>
    <property type="evidence" value="ECO:0000318"/>
    <property type="project" value="GO_Central"/>
</dbReference>
<dbReference type="GO" id="GO:1990269">
    <property type="term" value="F:RNA polymerase II C-terminal domain phosphoserine binding"/>
    <property type="evidence" value="ECO:0000318"/>
    <property type="project" value="GO_Central"/>
</dbReference>
<dbReference type="GO" id="GO:0032968">
    <property type="term" value="P:positive regulation of transcription elongation by RNA polymerase II"/>
    <property type="evidence" value="ECO:0000318"/>
    <property type="project" value="GO_Central"/>
</dbReference>
<dbReference type="GO" id="GO:0006368">
    <property type="term" value="P:transcription elongation by RNA polymerase II"/>
    <property type="evidence" value="ECO:0007669"/>
    <property type="project" value="InterPro"/>
</dbReference>
<dbReference type="InterPro" id="IPR007149">
    <property type="entry name" value="Leo1"/>
</dbReference>
<dbReference type="PANTHER" id="PTHR23146">
    <property type="entry name" value="LEO1 PROTEIN"/>
    <property type="match status" value="1"/>
</dbReference>
<dbReference type="PANTHER" id="PTHR23146:SF0">
    <property type="entry name" value="RNA POLYMERASE-ASSOCIATED PROTEIN LEO1"/>
    <property type="match status" value="1"/>
</dbReference>
<dbReference type="Pfam" id="PF04004">
    <property type="entry name" value="Leo1"/>
    <property type="match status" value="1"/>
</dbReference>
<sequence length="487" mass="56191">MNDFGEEDERQILEGTFVDKSSKQTTNDNENNNNNNNREEENENQDKNVTTKNDEDNNNDANDGDDDDDDLFGDKDLEENDNVNSDNEKNKSKKDKEDQDQEEQQEDQEDEEYSNKKKKKKSKKNKNRHSTEEDETMEDANENLDFATGAGEEEEEEEPELIRDPITLTHIETSNVLPAQKIMKLKLLNILGIQPKPFDPITFEDEEAMNGDEKSKFNVESVIRWRWGLDLNGRPAKESNTRLVTWSDGSSHLYIGNEVLEIKEQPLQNEQFYVYSSQDGFIECEGKIDSRLSIRPTNIKSKVHQRLSENVAKRTVKVSKIKSIHTTLDPEKEKEKREKELLDALREKKKQKDDSYRPNRGRGGKSGSLTASYLENDDDDYDSYRNEKGDDFVVDDDEDEEDDDYKESDDDGSDSSDDDGSESGESESDSDGDNKSKKKENKNSNDNKNNKSRKQDFDDDEDEDEDLIVSTKKVKRRVIDDDDDDED</sequence>
<feature type="chain" id="PRO_0000328894" description="RNA polymerase-associated protein LEO1">
    <location>
        <begin position="1"/>
        <end position="487"/>
    </location>
</feature>
<feature type="region of interest" description="Disordered" evidence="3">
    <location>
        <begin position="1"/>
        <end position="142"/>
    </location>
</feature>
<feature type="region of interest" description="Disordered" evidence="3">
    <location>
        <begin position="344"/>
        <end position="487"/>
    </location>
</feature>
<feature type="coiled-coil region" evidence="2">
    <location>
        <begin position="331"/>
        <end position="357"/>
    </location>
</feature>
<feature type="compositionally biased region" description="Low complexity" evidence="3">
    <location>
        <begin position="27"/>
        <end position="36"/>
    </location>
</feature>
<feature type="compositionally biased region" description="Acidic residues" evidence="3">
    <location>
        <begin position="56"/>
        <end position="81"/>
    </location>
</feature>
<feature type="compositionally biased region" description="Basic and acidic residues" evidence="3">
    <location>
        <begin position="86"/>
        <end position="97"/>
    </location>
</feature>
<feature type="compositionally biased region" description="Acidic residues" evidence="3">
    <location>
        <begin position="98"/>
        <end position="112"/>
    </location>
</feature>
<feature type="compositionally biased region" description="Basic residues" evidence="3">
    <location>
        <begin position="116"/>
        <end position="128"/>
    </location>
</feature>
<feature type="compositionally biased region" description="Acidic residues" evidence="3">
    <location>
        <begin position="132"/>
        <end position="142"/>
    </location>
</feature>
<feature type="compositionally biased region" description="Basic and acidic residues" evidence="3">
    <location>
        <begin position="344"/>
        <end position="357"/>
    </location>
</feature>
<feature type="compositionally biased region" description="Basic and acidic residues" evidence="3">
    <location>
        <begin position="382"/>
        <end position="391"/>
    </location>
</feature>
<feature type="compositionally biased region" description="Acidic residues" evidence="3">
    <location>
        <begin position="392"/>
        <end position="431"/>
    </location>
</feature>
<feature type="compositionally biased region" description="Basic and acidic residues" evidence="3">
    <location>
        <begin position="441"/>
        <end position="456"/>
    </location>
</feature>
<feature type="compositionally biased region" description="Acidic residues" evidence="3">
    <location>
        <begin position="457"/>
        <end position="467"/>
    </location>
</feature>